<keyword id="KW-0067">ATP-binding</keyword>
<keyword id="KW-0175">Coiled coil</keyword>
<keyword id="KW-0963">Cytoplasm</keyword>
<keyword id="KW-0418">Kinase</keyword>
<keyword id="KW-0460">Magnesium</keyword>
<keyword id="KW-0469">Meiosis</keyword>
<keyword id="KW-0479">Metal-binding</keyword>
<keyword id="KW-0547">Nucleotide-binding</keyword>
<keyword id="KW-0539">Nucleus</keyword>
<keyword id="KW-0597">Phosphoprotein</keyword>
<keyword id="KW-1185">Reference proteome</keyword>
<keyword id="KW-0808">Transferase</keyword>
<keyword id="KW-0829">Tyrosine-protein kinase</keyword>
<comment type="function">
    <text evidence="7 8 9">Oocyte-specific protein tyrosine kinase that phosphorylates and inhibits CDK1 and acts as a key regulator of meiosis during both prophase I and metaphase II. Required to maintain meiotic arrest in oocytes during the germinal vesicle (GV) stage, a long period of quiescence at dictyate prophase I, by phosphorylating CDK1 at 'Tyr-15', leading to inhibit CDK1 activity and prevent meiotic reentry. Also required for metaphase II exit during egg activation by phosphorylating CDK1 at 'Tyr-15', to ensure exit from meiosis in oocytes and promote pronuclear formation.</text>
</comment>
<comment type="catalytic activity">
    <reaction evidence="5">
        <text>L-tyrosyl-[protein] + ATP = O-phospho-L-tyrosyl-[protein] + ADP + H(+)</text>
        <dbReference type="Rhea" id="RHEA:10596"/>
        <dbReference type="Rhea" id="RHEA-COMP:10136"/>
        <dbReference type="Rhea" id="RHEA-COMP:20101"/>
        <dbReference type="ChEBI" id="CHEBI:15378"/>
        <dbReference type="ChEBI" id="CHEBI:30616"/>
        <dbReference type="ChEBI" id="CHEBI:46858"/>
        <dbReference type="ChEBI" id="CHEBI:61978"/>
        <dbReference type="ChEBI" id="CHEBI:456216"/>
        <dbReference type="EC" id="2.7.10.2"/>
    </reaction>
</comment>
<comment type="subcellular location">
    <subcellularLocation>
        <location>Cytoplasm</location>
    </subcellularLocation>
    <subcellularLocation>
        <location>Nucleus</location>
    </subcellularLocation>
    <text>Localizes mainly in the nucleus. Exported from the nucleus to the cytoplasm before germinal vesicle breakdown (GVBD), allowing meiosis resumption.</text>
</comment>
<comment type="tissue specificity">
    <text evidence="7">Ovary-specific.</text>
</comment>
<comment type="developmental stage">
    <text evidence="7 9">Detected only in the oocytes at all developmental stages of the follicle including primary, secondary, preantral, and antral follicles with an increase in signal during development. Readily detectable at the mature oocyte, but disappears at 2.5 dpc. Detected in germinal vesicle (GV) and metaphase II-stage oocyte (at protein level).</text>
</comment>
<comment type="PTM">
    <text evidence="7 9">Phosphorylated by PKA at Ser-15 in vitro, leading to activate kinase activity. Phosphorylation at Ser-15 by CaMK2, leading to increase its activity and promote metaphase II exit during egg activation.</text>
</comment>
<comment type="similarity">
    <text evidence="4">Belongs to the protein kinase superfamily. Ser/Thr protein kinase family. WEE1 subfamily.</text>
</comment>
<evidence type="ECO:0000250" key="1"/>
<evidence type="ECO:0000250" key="2">
    <source>
        <dbReference type="UniProtKB" id="A4PES0"/>
    </source>
</evidence>
<evidence type="ECO:0000255" key="3"/>
<evidence type="ECO:0000255" key="4">
    <source>
        <dbReference type="PROSITE-ProRule" id="PRU00159"/>
    </source>
</evidence>
<evidence type="ECO:0000255" key="5">
    <source>
        <dbReference type="PROSITE-ProRule" id="PRU10027"/>
    </source>
</evidence>
<evidence type="ECO:0000256" key="6">
    <source>
        <dbReference type="SAM" id="MobiDB-lite"/>
    </source>
</evidence>
<evidence type="ECO:0000269" key="7">
    <source>
    </source>
</evidence>
<evidence type="ECO:0000269" key="8">
    <source>
    </source>
</evidence>
<evidence type="ECO:0000269" key="9">
    <source>
    </source>
</evidence>
<evidence type="ECO:0000305" key="10"/>
<reference key="1">
    <citation type="journal article" date="2005" name="Curr. Biol.">
        <title>Wee1B is an oocyte-specific kinase involved in the control of meiotic arrest in the mouse.</title>
        <authorList>
            <person name="Han S.J."/>
            <person name="Chen R."/>
            <person name="Paronetto M.P."/>
            <person name="Conti M."/>
        </authorList>
    </citation>
    <scope>NUCLEOTIDE SEQUENCE [MRNA]</scope>
    <scope>FUNCTION</scope>
    <scope>TISSUE SPECIFICITY</scope>
    <scope>DEVELOPMENTAL STAGE</scope>
    <scope>PHOSPHORYLATION AT SER-15</scope>
    <scope>MUTAGENESIS OF SER-15</scope>
    <source>
        <strain>C57BL/6J</strain>
    </source>
</reference>
<reference key="2">
    <citation type="journal article" date="2005" name="Science">
        <title>The transcriptional landscape of the mammalian genome.</title>
        <authorList>
            <person name="Carninci P."/>
            <person name="Kasukawa T."/>
            <person name="Katayama S."/>
            <person name="Gough J."/>
            <person name="Frith M.C."/>
            <person name="Maeda N."/>
            <person name="Oyama R."/>
            <person name="Ravasi T."/>
            <person name="Lenhard B."/>
            <person name="Wells C."/>
            <person name="Kodzius R."/>
            <person name="Shimokawa K."/>
            <person name="Bajic V.B."/>
            <person name="Brenner S.E."/>
            <person name="Batalov S."/>
            <person name="Forrest A.R."/>
            <person name="Zavolan M."/>
            <person name="Davis M.J."/>
            <person name="Wilming L.G."/>
            <person name="Aidinis V."/>
            <person name="Allen J.E."/>
            <person name="Ambesi-Impiombato A."/>
            <person name="Apweiler R."/>
            <person name="Aturaliya R.N."/>
            <person name="Bailey T.L."/>
            <person name="Bansal M."/>
            <person name="Baxter L."/>
            <person name="Beisel K.W."/>
            <person name="Bersano T."/>
            <person name="Bono H."/>
            <person name="Chalk A.M."/>
            <person name="Chiu K.P."/>
            <person name="Choudhary V."/>
            <person name="Christoffels A."/>
            <person name="Clutterbuck D.R."/>
            <person name="Crowe M.L."/>
            <person name="Dalla E."/>
            <person name="Dalrymple B.P."/>
            <person name="de Bono B."/>
            <person name="Della Gatta G."/>
            <person name="di Bernardo D."/>
            <person name="Down T."/>
            <person name="Engstrom P."/>
            <person name="Fagiolini M."/>
            <person name="Faulkner G."/>
            <person name="Fletcher C.F."/>
            <person name="Fukushima T."/>
            <person name="Furuno M."/>
            <person name="Futaki S."/>
            <person name="Gariboldi M."/>
            <person name="Georgii-Hemming P."/>
            <person name="Gingeras T.R."/>
            <person name="Gojobori T."/>
            <person name="Green R.E."/>
            <person name="Gustincich S."/>
            <person name="Harbers M."/>
            <person name="Hayashi Y."/>
            <person name="Hensch T.K."/>
            <person name="Hirokawa N."/>
            <person name="Hill D."/>
            <person name="Huminiecki L."/>
            <person name="Iacono M."/>
            <person name="Ikeo K."/>
            <person name="Iwama A."/>
            <person name="Ishikawa T."/>
            <person name="Jakt M."/>
            <person name="Kanapin A."/>
            <person name="Katoh M."/>
            <person name="Kawasawa Y."/>
            <person name="Kelso J."/>
            <person name="Kitamura H."/>
            <person name="Kitano H."/>
            <person name="Kollias G."/>
            <person name="Krishnan S.P."/>
            <person name="Kruger A."/>
            <person name="Kummerfeld S.K."/>
            <person name="Kurochkin I.V."/>
            <person name="Lareau L.F."/>
            <person name="Lazarevic D."/>
            <person name="Lipovich L."/>
            <person name="Liu J."/>
            <person name="Liuni S."/>
            <person name="McWilliam S."/>
            <person name="Madan Babu M."/>
            <person name="Madera M."/>
            <person name="Marchionni L."/>
            <person name="Matsuda H."/>
            <person name="Matsuzawa S."/>
            <person name="Miki H."/>
            <person name="Mignone F."/>
            <person name="Miyake S."/>
            <person name="Morris K."/>
            <person name="Mottagui-Tabar S."/>
            <person name="Mulder N."/>
            <person name="Nakano N."/>
            <person name="Nakauchi H."/>
            <person name="Ng P."/>
            <person name="Nilsson R."/>
            <person name="Nishiguchi S."/>
            <person name="Nishikawa S."/>
            <person name="Nori F."/>
            <person name="Ohara O."/>
            <person name="Okazaki Y."/>
            <person name="Orlando V."/>
            <person name="Pang K.C."/>
            <person name="Pavan W.J."/>
            <person name="Pavesi G."/>
            <person name="Pesole G."/>
            <person name="Petrovsky N."/>
            <person name="Piazza S."/>
            <person name="Reed J."/>
            <person name="Reid J.F."/>
            <person name="Ring B.Z."/>
            <person name="Ringwald M."/>
            <person name="Rost B."/>
            <person name="Ruan Y."/>
            <person name="Salzberg S.L."/>
            <person name="Sandelin A."/>
            <person name="Schneider C."/>
            <person name="Schoenbach C."/>
            <person name="Sekiguchi K."/>
            <person name="Semple C.A."/>
            <person name="Seno S."/>
            <person name="Sessa L."/>
            <person name="Sheng Y."/>
            <person name="Shibata Y."/>
            <person name="Shimada H."/>
            <person name="Shimada K."/>
            <person name="Silva D."/>
            <person name="Sinclair B."/>
            <person name="Sperling S."/>
            <person name="Stupka E."/>
            <person name="Sugiura K."/>
            <person name="Sultana R."/>
            <person name="Takenaka Y."/>
            <person name="Taki K."/>
            <person name="Tammoja K."/>
            <person name="Tan S.L."/>
            <person name="Tang S."/>
            <person name="Taylor M.S."/>
            <person name="Tegner J."/>
            <person name="Teichmann S.A."/>
            <person name="Ueda H.R."/>
            <person name="van Nimwegen E."/>
            <person name="Verardo R."/>
            <person name="Wei C.L."/>
            <person name="Yagi K."/>
            <person name="Yamanishi H."/>
            <person name="Zabarovsky E."/>
            <person name="Zhu S."/>
            <person name="Zimmer A."/>
            <person name="Hide W."/>
            <person name="Bult C."/>
            <person name="Grimmond S.M."/>
            <person name="Teasdale R.D."/>
            <person name="Liu E.T."/>
            <person name="Brusic V."/>
            <person name="Quackenbush J."/>
            <person name="Wahlestedt C."/>
            <person name="Mattick J.S."/>
            <person name="Hume D.A."/>
            <person name="Kai C."/>
            <person name="Sasaki D."/>
            <person name="Tomaru Y."/>
            <person name="Fukuda S."/>
            <person name="Kanamori-Katayama M."/>
            <person name="Suzuki M."/>
            <person name="Aoki J."/>
            <person name="Arakawa T."/>
            <person name="Iida J."/>
            <person name="Imamura K."/>
            <person name="Itoh M."/>
            <person name="Kato T."/>
            <person name="Kawaji H."/>
            <person name="Kawagashira N."/>
            <person name="Kawashima T."/>
            <person name="Kojima M."/>
            <person name="Kondo S."/>
            <person name="Konno H."/>
            <person name="Nakano K."/>
            <person name="Ninomiya N."/>
            <person name="Nishio T."/>
            <person name="Okada M."/>
            <person name="Plessy C."/>
            <person name="Shibata K."/>
            <person name="Shiraki T."/>
            <person name="Suzuki S."/>
            <person name="Tagami M."/>
            <person name="Waki K."/>
            <person name="Watahiki A."/>
            <person name="Okamura-Oho Y."/>
            <person name="Suzuki H."/>
            <person name="Kawai J."/>
            <person name="Hayashizaki Y."/>
        </authorList>
    </citation>
    <scope>NUCLEOTIDE SEQUENCE [LARGE SCALE MRNA]</scope>
    <source>
        <strain>C57BL/6J</strain>
        <tissue>Egg</tissue>
        <tissue>Ovary</tissue>
    </source>
</reference>
<reference key="3">
    <citation type="journal article" date="2004" name="Genome Res.">
        <title>The status, quality, and expansion of the NIH full-length cDNA project: the Mammalian Gene Collection (MGC).</title>
        <authorList>
            <consortium name="The MGC Project Team"/>
        </authorList>
    </citation>
    <scope>NUCLEOTIDE SEQUENCE [LARGE SCALE MRNA]</scope>
    <source>
        <strain>C57BL/6J</strain>
        <tissue>Egg</tissue>
    </source>
</reference>
<reference key="4">
    <citation type="journal article" date="2000" name="Genes Cells">
        <title>Identification and characterization of human Wee1B, a new member of the Wee1 family of Cdk-inhibitory kinases.</title>
        <authorList>
            <person name="Nakanishi M."/>
            <person name="Ando H."/>
            <person name="Watanabe N."/>
            <person name="Kitamura K."/>
            <person name="Ito K."/>
            <person name="Okayama H."/>
            <person name="Miyamoto T."/>
            <person name="Agui T."/>
            <person name="Sasaki M."/>
        </authorList>
    </citation>
    <scope>SUBCELLULAR LOCATION</scope>
</reference>
<reference key="5">
    <citation type="journal article" date="2010" name="J. Cell Biol.">
        <title>Wee1B, Myt1, and Cdc25 function in distinct compartments of the mouse oocyte to control meiotic resumption.</title>
        <authorList>
            <person name="Oh J.S."/>
            <person name="Han S.J."/>
            <person name="Conti M."/>
        </authorList>
    </citation>
    <scope>FUNCTION</scope>
    <scope>SUBCELLULAR LOCATION</scope>
    <scope>MUTAGENESIS OF 167-LYS--LYS-169; LYS-237; LEU-311; LEU-316; LEU-320 AND LEU-322</scope>
</reference>
<reference key="6">
    <citation type="journal article" date="2011" name="Science">
        <title>Protein tyrosine kinase Wee1B is essential for metaphase II exit in mouse oocytes.</title>
        <authorList>
            <person name="Oh J.S."/>
            <person name="Susor A."/>
            <person name="Conti M."/>
        </authorList>
    </citation>
    <scope>FUNCTION</scope>
    <scope>DEVELOPMENTAL STAGE</scope>
    <scope>PHOSPHORYLATION AT SER-15</scope>
    <scope>MUTAGENESIS OF SER-15 AND LYS-237</scope>
</reference>
<gene>
    <name type="primary">Wee2</name>
    <name type="synonym">Wee1b</name>
</gene>
<feature type="chain" id="PRO_0000248080" description="Wee1-like protein kinase 2">
    <location>
        <begin position="1"/>
        <end position="555"/>
    </location>
</feature>
<feature type="domain" description="Protein kinase" evidence="4">
    <location>
        <begin position="208"/>
        <end position="485"/>
    </location>
</feature>
<feature type="region of interest" description="Disordered" evidence="6">
    <location>
        <begin position="1"/>
        <end position="112"/>
    </location>
</feature>
<feature type="coiled-coil region" evidence="3">
    <location>
        <begin position="488"/>
        <end position="514"/>
    </location>
</feature>
<feature type="short sequence motif" description="Nuclear localization signal">
    <location>
        <begin position="167"/>
        <end position="169"/>
    </location>
</feature>
<feature type="short sequence motif" description="Nuclear export signal">
    <location>
        <begin position="310"/>
        <end position="324"/>
    </location>
</feature>
<feature type="compositionally biased region" description="Polar residues" evidence="6">
    <location>
        <begin position="26"/>
        <end position="41"/>
    </location>
</feature>
<feature type="compositionally biased region" description="Basic and acidic residues" evidence="6">
    <location>
        <begin position="57"/>
        <end position="72"/>
    </location>
</feature>
<feature type="compositionally biased region" description="Polar residues" evidence="6">
    <location>
        <begin position="102"/>
        <end position="112"/>
    </location>
</feature>
<feature type="active site" description="Proton acceptor" evidence="4 5">
    <location>
        <position position="334"/>
    </location>
</feature>
<feature type="binding site" evidence="4">
    <location>
        <begin position="214"/>
        <end position="222"/>
    </location>
    <ligand>
        <name>ATP</name>
        <dbReference type="ChEBI" id="CHEBI:30616"/>
    </ligand>
</feature>
<feature type="binding site" evidence="10">
    <location>
        <position position="237"/>
    </location>
    <ligand>
        <name>ATP</name>
        <dbReference type="ChEBI" id="CHEBI:30616"/>
    </ligand>
</feature>
<feature type="binding site" evidence="1">
    <location>
        <position position="339"/>
    </location>
    <ligand>
        <name>Mg(2+)</name>
        <dbReference type="ChEBI" id="CHEBI:18420"/>
    </ligand>
</feature>
<feature type="binding site" evidence="1">
    <location>
        <position position="375"/>
    </location>
    <ligand>
        <name>Mg(2+)</name>
        <dbReference type="ChEBI" id="CHEBI:18420"/>
    </ligand>
</feature>
<feature type="modified residue" description="Phosphoserine; by CaMK2 and PKA" evidence="7 9">
    <location>
        <position position="15"/>
    </location>
</feature>
<feature type="modified residue" description="Phosphoserine" evidence="2">
    <location>
        <position position="71"/>
    </location>
</feature>
<feature type="mutagenesis site" description="Abolishes phosphorylation and impairs ability to maintain meiotic arrest in oocytes during the germinal vesicle (GV) stage and metaphase II exit during egg activation." evidence="7 9">
    <original>S</original>
    <variation>A</variation>
    <location>
        <position position="15"/>
    </location>
</feature>
<feature type="mutagenesis site" description="Mimicks phosphorylation state, lesading to enhance kinase activity and promote pronuclear formation." evidence="7 9">
    <original>S</original>
    <variation>D</variation>
    <location>
        <position position="15"/>
    </location>
</feature>
<feature type="mutagenesis site" description="Abolishes nuclear localization." evidence="8">
    <location>
        <begin position="167"/>
        <end position="169"/>
    </location>
</feature>
<feature type="mutagenesis site" description="Loss of function." evidence="8 9">
    <original>K</original>
    <variation>M</variation>
    <location>
        <position position="237"/>
    </location>
</feature>
<feature type="mutagenesis site" description="Abolishes the cytoplasmic localization; when associated with A-316; A-320 and A-322." evidence="8">
    <original>L</original>
    <variation>A</variation>
    <location>
        <position position="311"/>
    </location>
</feature>
<feature type="mutagenesis site" description="Abolishes the cytoplasmic localization; when associated with A-311; A-320 and A-322." evidence="8">
    <original>L</original>
    <variation>A</variation>
    <location>
        <position position="316"/>
    </location>
</feature>
<feature type="mutagenesis site" description="Abolishes the cytoplasmic localization; when associated with A-311; A-316 and A-322." evidence="8">
    <original>L</original>
    <variation>A</variation>
    <location>
        <position position="320"/>
    </location>
</feature>
<feature type="mutagenesis site" description="Abolishes the cytoplasmic localization; when associated with A-311; A-316 and A-320." evidence="8">
    <original>L</original>
    <variation>A</variation>
    <location>
        <position position="322"/>
    </location>
</feature>
<feature type="sequence conflict" description="In Ref. 3; AAH80784." evidence="10" ref="3">
    <original>E</original>
    <variation>K</variation>
    <location>
        <position position="21"/>
    </location>
</feature>
<feature type="sequence conflict" description="In Ref. 3; AAH52883." evidence="10" ref="3">
    <original>E</original>
    <variation>G</variation>
    <location>
        <position position="70"/>
    </location>
</feature>
<feature type="sequence conflict" description="In Ref. 3; AAH52883." evidence="10" ref="3">
    <original>L</original>
    <variation>P</variation>
    <location>
        <position position="98"/>
    </location>
</feature>
<feature type="sequence conflict" description="In Ref. 3; AAH80784." evidence="10" ref="3">
    <original>L</original>
    <variation>R</variation>
    <location>
        <position position="118"/>
    </location>
</feature>
<feature type="sequence conflict" description="In Ref. 3; AAH52883." evidence="10" ref="3">
    <original>M</original>
    <variation>V</variation>
    <location>
        <position position="138"/>
    </location>
</feature>
<protein>
    <recommendedName>
        <fullName>Wee1-like protein kinase 2</fullName>
        <ecNumber>2.7.10.2</ecNumber>
    </recommendedName>
    <alternativeName>
        <fullName>Wee1-like protein kinase 1B</fullName>
    </alternativeName>
    <alternativeName>
        <fullName>Wee1B kinase</fullName>
        <shortName>mWee1B</shortName>
    </alternativeName>
</protein>
<sequence>MADTETDQGLNKKLSFSFCEEDTESEGQMTAQDIGGAQSQKPGREESEELEGPVPPTRDELHTSLSRDKESPGPDLWKSVSGPPKCPETPVLHSKSKLPVPTNFSTPKNSLGQPEISLLEKLSSRSSRHMRLTPASLMDEKTSLSLVNINPFTPETYRKLLLQSKGKRKTRDYLEETGEEESKSVQWLPAKRSILQETNMASRYEKEFFEIEKIGVGEFGTVYKCIKRLDGCIYAIKRSAKSFSGLSNELDLHEVYAHAVLGHHPHVVRYYSSWIEDDHVVIQNEYCNGGSLQAAISENTASNNHFQEPKLKDILLQISLGLKYIHNSGMVHLDIKPSNIFICHKMQCDSPVGPEEAESEADWFLNASVMYKIGDLGHATSISKPKVEEGDTRFLANEILQENYQHLPKADIFALGLTIAVAAGAESLPINGDMWHHIRKGNFPEISQELSDDFYGLLKNMIHPAPKERPSAAALARSRILWPFLEKTDELQKQLNLEKSKTATLKRELKKARHIQTPQREVHHCYYQICKGSRHLLVGGRRKAPSSFTRGTSSV</sequence>
<name>WEE2_MOUSE</name>
<proteinExistence type="evidence at protein level"/>
<dbReference type="EC" id="2.7.10.2"/>
<dbReference type="EMBL" id="DQ011691">
    <property type="protein sequence ID" value="AAY44075.1"/>
    <property type="molecule type" value="mRNA"/>
</dbReference>
<dbReference type="EMBL" id="AK163344">
    <property type="protein sequence ID" value="BAE37310.1"/>
    <property type="molecule type" value="mRNA"/>
</dbReference>
<dbReference type="EMBL" id="AK143336">
    <property type="protein sequence ID" value="BAE25345.1"/>
    <property type="molecule type" value="mRNA"/>
</dbReference>
<dbReference type="EMBL" id="AK139573">
    <property type="protein sequence ID" value="BAE24069.1"/>
    <property type="molecule type" value="mRNA"/>
</dbReference>
<dbReference type="EMBL" id="BC052883">
    <property type="protein sequence ID" value="AAH52883.1"/>
    <property type="molecule type" value="mRNA"/>
</dbReference>
<dbReference type="EMBL" id="BC080784">
    <property type="protein sequence ID" value="AAH80784.1"/>
    <property type="molecule type" value="mRNA"/>
</dbReference>
<dbReference type="CCDS" id="CCDS20029.1"/>
<dbReference type="RefSeq" id="NP_958758.2">
    <property type="nucleotide sequence ID" value="NM_201370.2"/>
</dbReference>
<dbReference type="RefSeq" id="XP_006506389.1">
    <property type="nucleotide sequence ID" value="XM_006506326.4"/>
</dbReference>
<dbReference type="SMR" id="Q66JT0"/>
<dbReference type="FunCoup" id="Q66JT0">
    <property type="interactions" value="1002"/>
</dbReference>
<dbReference type="STRING" id="10090.ENSMUSP00000038754"/>
<dbReference type="iPTMnet" id="Q66JT0"/>
<dbReference type="PhosphoSitePlus" id="Q66JT0"/>
<dbReference type="PaxDb" id="10090-ENSMUSP00000038754"/>
<dbReference type="PeptideAtlas" id="Q66JT0"/>
<dbReference type="Antibodypedia" id="32491">
    <property type="antibodies" value="119 antibodies from 24 providers"/>
</dbReference>
<dbReference type="DNASU" id="381759"/>
<dbReference type="Ensembl" id="ENSMUST00000038907.9">
    <property type="protein sequence ID" value="ENSMUSP00000038754.9"/>
    <property type="gene ID" value="ENSMUSG00000037159.12"/>
</dbReference>
<dbReference type="GeneID" id="381759"/>
<dbReference type="KEGG" id="mmu:381759"/>
<dbReference type="UCSC" id="uc009bmq.2">
    <property type="organism name" value="mouse"/>
</dbReference>
<dbReference type="AGR" id="MGI:3027899"/>
<dbReference type="CTD" id="494551"/>
<dbReference type="MGI" id="MGI:3027899">
    <property type="gene designation" value="Wee2"/>
</dbReference>
<dbReference type="VEuPathDB" id="HostDB:ENSMUSG00000037159"/>
<dbReference type="eggNOG" id="KOG0601">
    <property type="taxonomic scope" value="Eukaryota"/>
</dbReference>
<dbReference type="GeneTree" id="ENSGT00940000158803"/>
<dbReference type="HOGENOM" id="CLU_000288_25_1_1"/>
<dbReference type="InParanoid" id="Q66JT0"/>
<dbReference type="OMA" id="HEKMPRS"/>
<dbReference type="OrthoDB" id="5337378at2759"/>
<dbReference type="PhylomeDB" id="Q66JT0"/>
<dbReference type="TreeFam" id="TF101088"/>
<dbReference type="BioGRID-ORCS" id="381759">
    <property type="hits" value="2 hits in 78 CRISPR screens"/>
</dbReference>
<dbReference type="ChiTaRS" id="Wee2">
    <property type="organism name" value="mouse"/>
</dbReference>
<dbReference type="PRO" id="PR:Q66JT0"/>
<dbReference type="Proteomes" id="UP000000589">
    <property type="component" value="Chromosome 6"/>
</dbReference>
<dbReference type="RNAct" id="Q66JT0">
    <property type="molecule type" value="protein"/>
</dbReference>
<dbReference type="Bgee" id="ENSMUSG00000037159">
    <property type="expression patterns" value="Expressed in animal zygote and 26 other cell types or tissues"/>
</dbReference>
<dbReference type="ExpressionAtlas" id="Q66JT0">
    <property type="expression patterns" value="baseline and differential"/>
</dbReference>
<dbReference type="GO" id="GO:0005737">
    <property type="term" value="C:cytoplasm"/>
    <property type="evidence" value="ECO:0000314"/>
    <property type="project" value="UniProtKB"/>
</dbReference>
<dbReference type="GO" id="GO:0005829">
    <property type="term" value="C:cytosol"/>
    <property type="evidence" value="ECO:0007669"/>
    <property type="project" value="Ensembl"/>
</dbReference>
<dbReference type="GO" id="GO:0005654">
    <property type="term" value="C:nucleoplasm"/>
    <property type="evidence" value="ECO:0007669"/>
    <property type="project" value="Ensembl"/>
</dbReference>
<dbReference type="GO" id="GO:0005634">
    <property type="term" value="C:nucleus"/>
    <property type="evidence" value="ECO:0000314"/>
    <property type="project" value="UniProtKB"/>
</dbReference>
<dbReference type="GO" id="GO:0005886">
    <property type="term" value="C:plasma membrane"/>
    <property type="evidence" value="ECO:0007669"/>
    <property type="project" value="Ensembl"/>
</dbReference>
<dbReference type="GO" id="GO:0005524">
    <property type="term" value="F:ATP binding"/>
    <property type="evidence" value="ECO:0007669"/>
    <property type="project" value="UniProtKB-KW"/>
</dbReference>
<dbReference type="GO" id="GO:0000287">
    <property type="term" value="F:magnesium ion binding"/>
    <property type="evidence" value="ECO:0007669"/>
    <property type="project" value="InterPro"/>
</dbReference>
<dbReference type="GO" id="GO:0004715">
    <property type="term" value="F:non-membrane spanning protein tyrosine kinase activity"/>
    <property type="evidence" value="ECO:0007669"/>
    <property type="project" value="UniProtKB-EC"/>
</dbReference>
<dbReference type="GO" id="GO:0004713">
    <property type="term" value="F:protein tyrosine kinase activity"/>
    <property type="evidence" value="ECO:0000304"/>
    <property type="project" value="UniProtKB"/>
</dbReference>
<dbReference type="GO" id="GO:0007143">
    <property type="term" value="P:female meiotic nuclear division"/>
    <property type="evidence" value="ECO:0000315"/>
    <property type="project" value="UniProtKB"/>
</dbReference>
<dbReference type="GO" id="GO:0035038">
    <property type="term" value="P:female pronucleus assembly"/>
    <property type="evidence" value="ECO:0000315"/>
    <property type="project" value="UniProtKB"/>
</dbReference>
<dbReference type="GO" id="GO:0000278">
    <property type="term" value="P:mitotic cell cycle"/>
    <property type="evidence" value="ECO:0007669"/>
    <property type="project" value="InterPro"/>
</dbReference>
<dbReference type="GO" id="GO:0045736">
    <property type="term" value="P:negative regulation of cyclin-dependent protein serine/threonine kinase activity"/>
    <property type="evidence" value="ECO:0000315"/>
    <property type="project" value="UniProtKB"/>
</dbReference>
<dbReference type="GO" id="GO:1900194">
    <property type="term" value="P:negative regulation of oocyte maturation"/>
    <property type="evidence" value="ECO:0000315"/>
    <property type="project" value="UniProtKB"/>
</dbReference>
<dbReference type="GO" id="GO:0042327">
    <property type="term" value="P:positive regulation of phosphorylation"/>
    <property type="evidence" value="ECO:0000314"/>
    <property type="project" value="UniProtKB"/>
</dbReference>
<dbReference type="GO" id="GO:0080154">
    <property type="term" value="P:regulation of fertilization"/>
    <property type="evidence" value="ECO:0000315"/>
    <property type="project" value="UniProtKB"/>
</dbReference>
<dbReference type="GO" id="GO:0060631">
    <property type="term" value="P:regulation of meiosis I"/>
    <property type="evidence" value="ECO:0000315"/>
    <property type="project" value="UniProtKB"/>
</dbReference>
<dbReference type="FunFam" id="3.30.200.20:FF:000115">
    <property type="entry name" value="Wee1-like kinase 2"/>
    <property type="match status" value="1"/>
</dbReference>
<dbReference type="FunFam" id="1.10.510.10:FF:000217">
    <property type="entry name" value="Wee1-like protein kinase"/>
    <property type="match status" value="1"/>
</dbReference>
<dbReference type="Gene3D" id="3.30.200.20">
    <property type="entry name" value="Phosphorylase Kinase, domain 1"/>
    <property type="match status" value="1"/>
</dbReference>
<dbReference type="Gene3D" id="1.10.510.10">
    <property type="entry name" value="Transferase(Phosphotransferase) domain 1"/>
    <property type="match status" value="1"/>
</dbReference>
<dbReference type="InterPro" id="IPR050339">
    <property type="entry name" value="CC_SR_Kinase"/>
</dbReference>
<dbReference type="InterPro" id="IPR011009">
    <property type="entry name" value="Kinase-like_dom_sf"/>
</dbReference>
<dbReference type="InterPro" id="IPR000719">
    <property type="entry name" value="Prot_kinase_dom"/>
</dbReference>
<dbReference type="InterPro" id="IPR017441">
    <property type="entry name" value="Protein_kinase_ATP_BS"/>
</dbReference>
<dbReference type="InterPro" id="IPR008271">
    <property type="entry name" value="Ser/Thr_kinase_AS"/>
</dbReference>
<dbReference type="InterPro" id="IPR017164">
    <property type="entry name" value="Wee1-like_protein_kinase"/>
</dbReference>
<dbReference type="PANTHER" id="PTHR11042">
    <property type="entry name" value="EUKARYOTIC TRANSLATION INITIATION FACTOR 2-ALPHA KINASE EIF2-ALPHA KINASE -RELATED"/>
    <property type="match status" value="1"/>
</dbReference>
<dbReference type="PANTHER" id="PTHR11042:SF75">
    <property type="entry name" value="WEE1-LIKE PROTEIN KINASE 2"/>
    <property type="match status" value="1"/>
</dbReference>
<dbReference type="Pfam" id="PF00069">
    <property type="entry name" value="Pkinase"/>
    <property type="match status" value="1"/>
</dbReference>
<dbReference type="PIRSF" id="PIRSF037281">
    <property type="entry name" value="Wee1-like_protein_kinase"/>
    <property type="match status" value="1"/>
</dbReference>
<dbReference type="SMART" id="SM00220">
    <property type="entry name" value="S_TKc"/>
    <property type="match status" value="1"/>
</dbReference>
<dbReference type="SUPFAM" id="SSF56112">
    <property type="entry name" value="Protein kinase-like (PK-like)"/>
    <property type="match status" value="1"/>
</dbReference>
<dbReference type="PROSITE" id="PS00107">
    <property type="entry name" value="PROTEIN_KINASE_ATP"/>
    <property type="match status" value="1"/>
</dbReference>
<dbReference type="PROSITE" id="PS50011">
    <property type="entry name" value="PROTEIN_KINASE_DOM"/>
    <property type="match status" value="1"/>
</dbReference>
<dbReference type="PROSITE" id="PS00108">
    <property type="entry name" value="PROTEIN_KINASE_ST"/>
    <property type="match status" value="1"/>
</dbReference>
<accession>Q66JT0</accession>
<accession>Q4U4S4</accession>
<accession>Q7TPV9</accession>
<organism>
    <name type="scientific">Mus musculus</name>
    <name type="common">Mouse</name>
    <dbReference type="NCBI Taxonomy" id="10090"/>
    <lineage>
        <taxon>Eukaryota</taxon>
        <taxon>Metazoa</taxon>
        <taxon>Chordata</taxon>
        <taxon>Craniata</taxon>
        <taxon>Vertebrata</taxon>
        <taxon>Euteleostomi</taxon>
        <taxon>Mammalia</taxon>
        <taxon>Eutheria</taxon>
        <taxon>Euarchontoglires</taxon>
        <taxon>Glires</taxon>
        <taxon>Rodentia</taxon>
        <taxon>Myomorpha</taxon>
        <taxon>Muroidea</taxon>
        <taxon>Muridae</taxon>
        <taxon>Murinae</taxon>
        <taxon>Mus</taxon>
        <taxon>Mus</taxon>
    </lineage>
</organism>